<name>ZDHC6_BOVIN</name>
<gene>
    <name evidence="2" type="primary">ZDHHC6</name>
</gene>
<accession>Q2HJ95</accession>
<protein>
    <recommendedName>
        <fullName evidence="2">Palmitoyltransferase ZDHHC6</fullName>
        <ecNumber evidence="2">2.3.1.225</ecNumber>
    </recommendedName>
    <alternativeName>
        <fullName evidence="6">Stearoyltransferase ZDHHC6</fullName>
        <ecNumber evidence="2">2.3.1.-</ecNumber>
    </alternativeName>
    <alternativeName>
        <fullName evidence="2">Zinc finger DHHC domain-containing protein 6</fullName>
        <shortName evidence="2">DHHC-6</shortName>
    </alternativeName>
</protein>
<evidence type="ECO:0000250" key="1">
    <source>
        <dbReference type="UniProtKB" id="Q8IUH5"/>
    </source>
</evidence>
<evidence type="ECO:0000250" key="2">
    <source>
        <dbReference type="UniProtKB" id="Q9H6R6"/>
    </source>
</evidence>
<evidence type="ECO:0000255" key="3"/>
<evidence type="ECO:0000255" key="4">
    <source>
        <dbReference type="PROSITE-ProRule" id="PRU00067"/>
    </source>
</evidence>
<evidence type="ECO:0000255" key="5">
    <source>
        <dbReference type="PROSITE-ProRule" id="PRU00192"/>
    </source>
</evidence>
<evidence type="ECO:0000305" key="6"/>
<dbReference type="EC" id="2.3.1.225" evidence="2"/>
<dbReference type="EC" id="2.3.1.-" evidence="2"/>
<dbReference type="EMBL" id="BC113243">
    <property type="protein sequence ID" value="AAI13244.1"/>
    <property type="molecule type" value="mRNA"/>
</dbReference>
<dbReference type="RefSeq" id="NP_001039632.1">
    <property type="nucleotide sequence ID" value="NM_001046167.1"/>
</dbReference>
<dbReference type="RefSeq" id="XP_024841362.1">
    <property type="nucleotide sequence ID" value="XM_024985594.2"/>
</dbReference>
<dbReference type="SMR" id="Q2HJ95"/>
<dbReference type="FunCoup" id="Q2HJ95">
    <property type="interactions" value="3898"/>
</dbReference>
<dbReference type="STRING" id="9913.ENSBTAP00000008828"/>
<dbReference type="PaxDb" id="9913-ENSBTAP00000008828"/>
<dbReference type="Ensembl" id="ENSBTAT00000008828.6">
    <property type="protein sequence ID" value="ENSBTAP00000008828.4"/>
    <property type="gene ID" value="ENSBTAG00000006713.6"/>
</dbReference>
<dbReference type="GeneID" id="514158"/>
<dbReference type="KEGG" id="bta:514158"/>
<dbReference type="CTD" id="64429"/>
<dbReference type="VEuPathDB" id="HostDB:ENSBTAG00000006713"/>
<dbReference type="VGNC" id="VGNC:37144">
    <property type="gene designation" value="ZDHHC6"/>
</dbReference>
<dbReference type="eggNOG" id="KOG1314">
    <property type="taxonomic scope" value="Eukaryota"/>
</dbReference>
<dbReference type="GeneTree" id="ENSGT00940000155642"/>
<dbReference type="HOGENOM" id="CLU_044394_1_0_1"/>
<dbReference type="InParanoid" id="Q2HJ95"/>
<dbReference type="OMA" id="GCIHAAI"/>
<dbReference type="OrthoDB" id="331948at2759"/>
<dbReference type="TreeFam" id="TF320809"/>
<dbReference type="Proteomes" id="UP000009136">
    <property type="component" value="Chromosome 26"/>
</dbReference>
<dbReference type="Bgee" id="ENSBTAG00000006713">
    <property type="expression patterns" value="Expressed in oocyte and 105 other cell types or tissues"/>
</dbReference>
<dbReference type="GO" id="GO:0005783">
    <property type="term" value="C:endoplasmic reticulum"/>
    <property type="evidence" value="ECO:0000250"/>
    <property type="project" value="UniProtKB"/>
</dbReference>
<dbReference type="GO" id="GO:0005789">
    <property type="term" value="C:endoplasmic reticulum membrane"/>
    <property type="evidence" value="ECO:0007669"/>
    <property type="project" value="UniProtKB-SubCell"/>
</dbReference>
<dbReference type="GO" id="GO:0005794">
    <property type="term" value="C:Golgi apparatus"/>
    <property type="evidence" value="ECO:0000318"/>
    <property type="project" value="GO_Central"/>
</dbReference>
<dbReference type="GO" id="GO:0016409">
    <property type="term" value="F:palmitoyltransferase activity"/>
    <property type="evidence" value="ECO:0000250"/>
    <property type="project" value="UniProtKB"/>
</dbReference>
<dbReference type="GO" id="GO:0019706">
    <property type="term" value="F:protein-cysteine S-palmitoyltransferase activity"/>
    <property type="evidence" value="ECO:0000318"/>
    <property type="project" value="GO_Central"/>
</dbReference>
<dbReference type="GO" id="GO:0140439">
    <property type="term" value="F:protein-cysteine S-stearoyltransferase activity"/>
    <property type="evidence" value="ECO:0000250"/>
    <property type="project" value="UniProtKB"/>
</dbReference>
<dbReference type="GO" id="GO:0010636">
    <property type="term" value="P:positive regulation of mitochondrial fusion"/>
    <property type="evidence" value="ECO:0007669"/>
    <property type="project" value="Ensembl"/>
</dbReference>
<dbReference type="GO" id="GO:0018345">
    <property type="term" value="P:protein palmitoylation"/>
    <property type="evidence" value="ECO:0000250"/>
    <property type="project" value="UniProtKB"/>
</dbReference>
<dbReference type="GO" id="GO:0140438">
    <property type="term" value="P:protein stearoylation"/>
    <property type="evidence" value="ECO:0000250"/>
    <property type="project" value="UniProtKB"/>
</dbReference>
<dbReference type="GO" id="GO:0006612">
    <property type="term" value="P:protein targeting to membrane"/>
    <property type="evidence" value="ECO:0000318"/>
    <property type="project" value="GO_Central"/>
</dbReference>
<dbReference type="InterPro" id="IPR001594">
    <property type="entry name" value="Palmitoyltrfase_DHHC"/>
</dbReference>
<dbReference type="InterPro" id="IPR039859">
    <property type="entry name" value="PFA4/ZDH16/20/ERF2-like"/>
</dbReference>
<dbReference type="InterPro" id="IPR001452">
    <property type="entry name" value="SH3_domain"/>
</dbReference>
<dbReference type="PANTHER" id="PTHR12246">
    <property type="entry name" value="PALMITOYLTRANSFERASE ZDHHC16"/>
    <property type="match status" value="1"/>
</dbReference>
<dbReference type="Pfam" id="PF01529">
    <property type="entry name" value="DHHC"/>
    <property type="match status" value="1"/>
</dbReference>
<dbReference type="Pfam" id="PF07653">
    <property type="entry name" value="SH3_2"/>
    <property type="match status" value="1"/>
</dbReference>
<dbReference type="PROSITE" id="PS50216">
    <property type="entry name" value="DHHC"/>
    <property type="match status" value="1"/>
</dbReference>
<dbReference type="PROSITE" id="PS50002">
    <property type="entry name" value="SH3"/>
    <property type="match status" value="1"/>
</dbReference>
<sequence length="413" mass="47531">MGTFCSVVKFENLQELKRLCHWGPIIALGVIAICSAMAMIDSVLWYWPLHTTGGSVNFIMLINWTVMILYNYFNAMFVGPGFVPLGWKPENSQDSVYLQYCKVCQAYKAPRSHHCRKCNRCVMKMDHHCPWINNCCGYQNHASFTLFLLLAPLGCIHAAFIFVMTMYTQLYNRLSFGWNTVKIDMSAARRDPLPIIPFGLAAFAATLFALGLALGTTIAVGMLFFIQMKIILRNKTSIESWIEEKAKDRIQYYQLDEVFVFPYDMGSRWKNFKQVFTWSGVPEGDGLDWPIREGCHQYSLTIEQLKQKADKRVRSVRYKVIEDYSGTCCPLNRGIKTFFTSPCTEEPRIRLQKGEFILATRGLRYWLYGDKILDDSVLEGVSRIRGWFPRNCVEKCPCDAETDQAPEGEKKNR</sequence>
<keyword id="KW-0012">Acyltransferase</keyword>
<keyword id="KW-0256">Endoplasmic reticulum</keyword>
<keyword id="KW-0449">Lipoprotein</keyword>
<keyword id="KW-0472">Membrane</keyword>
<keyword id="KW-0564">Palmitate</keyword>
<keyword id="KW-1185">Reference proteome</keyword>
<keyword id="KW-0728">SH3 domain</keyword>
<keyword id="KW-0808">Transferase</keyword>
<keyword id="KW-0812">Transmembrane</keyword>
<keyword id="KW-1133">Transmembrane helix</keyword>
<organism>
    <name type="scientific">Bos taurus</name>
    <name type="common">Bovine</name>
    <dbReference type="NCBI Taxonomy" id="9913"/>
    <lineage>
        <taxon>Eukaryota</taxon>
        <taxon>Metazoa</taxon>
        <taxon>Chordata</taxon>
        <taxon>Craniata</taxon>
        <taxon>Vertebrata</taxon>
        <taxon>Euteleostomi</taxon>
        <taxon>Mammalia</taxon>
        <taxon>Eutheria</taxon>
        <taxon>Laurasiatheria</taxon>
        <taxon>Artiodactyla</taxon>
        <taxon>Ruminantia</taxon>
        <taxon>Pecora</taxon>
        <taxon>Bovidae</taxon>
        <taxon>Bovinae</taxon>
        <taxon>Bos</taxon>
    </lineage>
</organism>
<feature type="chain" id="PRO_0000269227" description="Palmitoyltransferase ZDHHC6">
    <location>
        <begin position="1"/>
        <end position="413"/>
    </location>
</feature>
<feature type="topological domain" description="Cytoplasmic" evidence="6">
    <location>
        <begin position="1"/>
        <end position="24"/>
    </location>
</feature>
<feature type="transmembrane region" description="Helical" evidence="3">
    <location>
        <begin position="25"/>
        <end position="45"/>
    </location>
</feature>
<feature type="topological domain" description="Lumenal" evidence="6">
    <location>
        <begin position="46"/>
        <end position="57"/>
    </location>
</feature>
<feature type="transmembrane region" description="Helical" evidence="3">
    <location>
        <begin position="58"/>
        <end position="78"/>
    </location>
</feature>
<feature type="topological domain" description="Cytoplasmic" evidence="6">
    <location>
        <begin position="79"/>
        <end position="143"/>
    </location>
</feature>
<feature type="transmembrane region" description="Helical" evidence="3">
    <location>
        <begin position="144"/>
        <end position="164"/>
    </location>
</feature>
<feature type="topological domain" description="Lumenal" evidence="6">
    <location>
        <begin position="165"/>
        <end position="194"/>
    </location>
</feature>
<feature type="transmembrane region" description="Helical" evidence="3">
    <location>
        <begin position="195"/>
        <end position="215"/>
    </location>
</feature>
<feature type="topological domain" description="Cytoplasmic" evidence="6">
    <location>
        <begin position="216"/>
        <end position="413"/>
    </location>
</feature>
<feature type="domain" description="DHHC" evidence="4">
    <location>
        <begin position="99"/>
        <end position="149"/>
    </location>
</feature>
<feature type="domain" description="SH3" evidence="5">
    <location>
        <begin position="313"/>
        <end position="398"/>
    </location>
</feature>
<feature type="short sequence motif" description="Di-lysine motif" evidence="2">
    <location>
        <begin position="410"/>
        <end position="413"/>
    </location>
</feature>
<feature type="active site" description="S-palmitoyl cysteine intermediate" evidence="1">
    <location>
        <position position="129"/>
    </location>
</feature>
<feature type="lipid moiety-binding region" description="S-palmitoyl cysteine" evidence="2">
    <location>
        <position position="328"/>
    </location>
</feature>
<feature type="lipid moiety-binding region" description="S-palmitoyl cysteine" evidence="2">
    <location>
        <position position="329"/>
    </location>
</feature>
<feature type="lipid moiety-binding region" description="S-palmitoyl cysteine" evidence="2">
    <location>
        <position position="343"/>
    </location>
</feature>
<comment type="function">
    <text evidence="2">Endoplasmic reticulum palmitoyl acyltransferase that mediates palmitoylation of proteins such as AMFR, CALX, ITPR1 and TFRC (By similarity). Palmitoylates calnexin (CALX), which is required for its association with the ribosome-translocon complex and efficient folding of glycosylated proteins (By similarity). Mediates palmitoylation of AMFR, promoting AMFR distribution to the peripheral endoplasmic reticulum (By similarity). Together with SELENOK, palmitoylates ITPR1 in immune cells, leading to regulate ITPR1 stability and function (By similarity). Stearoyltransferase that mediates stearoylation of TFRC to inhibit TFRC-mediated activation of the JNK pathway and mitochondrial fragmentation (By similarity).</text>
</comment>
<comment type="catalytic activity">
    <reaction evidence="2">
        <text>L-cysteinyl-[protein] + hexadecanoyl-CoA = S-hexadecanoyl-L-cysteinyl-[protein] + CoA</text>
        <dbReference type="Rhea" id="RHEA:36683"/>
        <dbReference type="Rhea" id="RHEA-COMP:10131"/>
        <dbReference type="Rhea" id="RHEA-COMP:11032"/>
        <dbReference type="ChEBI" id="CHEBI:29950"/>
        <dbReference type="ChEBI" id="CHEBI:57287"/>
        <dbReference type="ChEBI" id="CHEBI:57379"/>
        <dbReference type="ChEBI" id="CHEBI:74151"/>
        <dbReference type="EC" id="2.3.1.225"/>
    </reaction>
    <physiologicalReaction direction="left-to-right" evidence="2">
        <dbReference type="Rhea" id="RHEA:36684"/>
    </physiologicalReaction>
</comment>
<comment type="catalytic activity">
    <reaction evidence="2">
        <text>L-cysteinyl-[protein] + octadecanoyl-CoA = S-octadecanoyl-L-cysteinyl-[protein] + CoA</text>
        <dbReference type="Rhea" id="RHEA:59740"/>
        <dbReference type="Rhea" id="RHEA-COMP:10131"/>
        <dbReference type="Rhea" id="RHEA-COMP:15434"/>
        <dbReference type="ChEBI" id="CHEBI:29950"/>
        <dbReference type="ChEBI" id="CHEBI:57287"/>
        <dbReference type="ChEBI" id="CHEBI:57394"/>
        <dbReference type="ChEBI" id="CHEBI:143200"/>
    </reaction>
    <physiologicalReaction direction="left-to-right" evidence="2">
        <dbReference type="Rhea" id="RHEA:59741"/>
    </physiologicalReaction>
</comment>
<comment type="subunit">
    <text evidence="2">Homooligomerizes. Interacts with SELENOK.</text>
</comment>
<comment type="subcellular location">
    <subcellularLocation>
        <location evidence="2">Endoplasmic reticulum membrane</location>
        <topology evidence="3">Multi-pass membrane protein</topology>
    </subcellularLocation>
    <text evidence="2">When not palmitoylated, accumulates to dot-like structures in the endoplasmic reticulum.</text>
</comment>
<comment type="domain">
    <text evidence="1">The DHHC domain is required for palmitoyltransferase activity.</text>
</comment>
<comment type="domain">
    <text evidence="2">The C-terminal di-lysine motif confers endoplasmic reticulum localization.</text>
</comment>
<comment type="PTM">
    <text evidence="2">Palmitoylated at 3 different sites by ZDHHC16. The combination of the different palmitoylation events strongly affects the quaternary assembly of ZDHHC6, its localization, stability and function. Palmitoylation at Cys-328 accelerates the turnover of ZDHHC6. Depalmitoylated by LYPLA2.</text>
</comment>
<comment type="similarity">
    <text evidence="6">Belongs to the DHHC palmitoyltransferase family.</text>
</comment>
<reference key="1">
    <citation type="submission" date="2006-02" db="EMBL/GenBank/DDBJ databases">
        <authorList>
            <consortium name="NIH - Mammalian Gene Collection (MGC) project"/>
        </authorList>
    </citation>
    <scope>NUCLEOTIDE SEQUENCE [LARGE SCALE MRNA]</scope>
    <source>
        <strain>Hereford</strain>
        <tissue>Uterus</tissue>
    </source>
</reference>
<proteinExistence type="evidence at transcript level"/>